<feature type="chain" id="PRO_0000238359" description="ATP synthase subunit alpha">
    <location>
        <begin position="1"/>
        <end position="502"/>
    </location>
</feature>
<feature type="region of interest" description="Disordered" evidence="2">
    <location>
        <begin position="115"/>
        <end position="134"/>
    </location>
</feature>
<feature type="binding site" evidence="1">
    <location>
        <begin position="169"/>
        <end position="176"/>
    </location>
    <ligand>
        <name>ATP</name>
        <dbReference type="ChEBI" id="CHEBI:30616"/>
    </ligand>
</feature>
<feature type="site" description="Required for activity" evidence="1">
    <location>
        <position position="362"/>
    </location>
</feature>
<gene>
    <name evidence="1" type="primary">atpA</name>
    <name type="ordered locus">SH0930</name>
</gene>
<accession>Q4L7Y6</accession>
<evidence type="ECO:0000255" key="1">
    <source>
        <dbReference type="HAMAP-Rule" id="MF_01346"/>
    </source>
</evidence>
<evidence type="ECO:0000256" key="2">
    <source>
        <dbReference type="SAM" id="MobiDB-lite"/>
    </source>
</evidence>
<comment type="function">
    <text evidence="1">Produces ATP from ADP in the presence of a proton gradient across the membrane. The alpha chain is a regulatory subunit.</text>
</comment>
<comment type="catalytic activity">
    <reaction evidence="1">
        <text>ATP + H2O + 4 H(+)(in) = ADP + phosphate + 5 H(+)(out)</text>
        <dbReference type="Rhea" id="RHEA:57720"/>
        <dbReference type="ChEBI" id="CHEBI:15377"/>
        <dbReference type="ChEBI" id="CHEBI:15378"/>
        <dbReference type="ChEBI" id="CHEBI:30616"/>
        <dbReference type="ChEBI" id="CHEBI:43474"/>
        <dbReference type="ChEBI" id="CHEBI:456216"/>
        <dbReference type="EC" id="7.1.2.2"/>
    </reaction>
</comment>
<comment type="subunit">
    <text evidence="1">F-type ATPases have 2 components, CF(1) - the catalytic core - and CF(0) - the membrane proton channel. CF(1) has five subunits: alpha(3), beta(3), gamma(1), delta(1), epsilon(1). CF(0) has three main subunits: a(1), b(2) and c(9-12). The alpha and beta chains form an alternating ring which encloses part of the gamma chain. CF(1) is attached to CF(0) by a central stalk formed by the gamma and epsilon chains, while a peripheral stalk is formed by the delta and b chains.</text>
</comment>
<comment type="subcellular location">
    <subcellularLocation>
        <location evidence="1">Cell membrane</location>
        <topology evidence="1">Peripheral membrane protein</topology>
    </subcellularLocation>
</comment>
<comment type="similarity">
    <text evidence="1">Belongs to the ATPase alpha/beta chains family.</text>
</comment>
<protein>
    <recommendedName>
        <fullName evidence="1">ATP synthase subunit alpha</fullName>
        <ecNumber evidence="1">7.1.2.2</ecNumber>
    </recommendedName>
    <alternativeName>
        <fullName evidence="1">ATP synthase F1 sector subunit alpha</fullName>
    </alternativeName>
    <alternativeName>
        <fullName evidence="1">F-ATPase subunit alpha</fullName>
    </alternativeName>
</protein>
<name>ATPA_STAHJ</name>
<proteinExistence type="inferred from homology"/>
<organism>
    <name type="scientific">Staphylococcus haemolyticus (strain JCSC1435)</name>
    <dbReference type="NCBI Taxonomy" id="279808"/>
    <lineage>
        <taxon>Bacteria</taxon>
        <taxon>Bacillati</taxon>
        <taxon>Bacillota</taxon>
        <taxon>Bacilli</taxon>
        <taxon>Bacillales</taxon>
        <taxon>Staphylococcaceae</taxon>
        <taxon>Staphylococcus</taxon>
    </lineage>
</organism>
<dbReference type="EC" id="7.1.2.2" evidence="1"/>
<dbReference type="EMBL" id="AP006716">
    <property type="protein sequence ID" value="BAE04239.1"/>
    <property type="molecule type" value="Genomic_DNA"/>
</dbReference>
<dbReference type="RefSeq" id="WP_011275241.1">
    <property type="nucleotide sequence ID" value="NC_007168.1"/>
</dbReference>
<dbReference type="SMR" id="Q4L7Y6"/>
<dbReference type="GeneID" id="93780318"/>
<dbReference type="KEGG" id="sha:SH0930"/>
<dbReference type="eggNOG" id="COG0056">
    <property type="taxonomic scope" value="Bacteria"/>
</dbReference>
<dbReference type="HOGENOM" id="CLU_010091_2_1_9"/>
<dbReference type="OrthoDB" id="9803053at2"/>
<dbReference type="Proteomes" id="UP000000543">
    <property type="component" value="Chromosome"/>
</dbReference>
<dbReference type="GO" id="GO:0005886">
    <property type="term" value="C:plasma membrane"/>
    <property type="evidence" value="ECO:0007669"/>
    <property type="project" value="UniProtKB-SubCell"/>
</dbReference>
<dbReference type="GO" id="GO:0045259">
    <property type="term" value="C:proton-transporting ATP synthase complex"/>
    <property type="evidence" value="ECO:0007669"/>
    <property type="project" value="UniProtKB-KW"/>
</dbReference>
<dbReference type="GO" id="GO:0043531">
    <property type="term" value="F:ADP binding"/>
    <property type="evidence" value="ECO:0007669"/>
    <property type="project" value="TreeGrafter"/>
</dbReference>
<dbReference type="GO" id="GO:0005524">
    <property type="term" value="F:ATP binding"/>
    <property type="evidence" value="ECO:0007669"/>
    <property type="project" value="UniProtKB-UniRule"/>
</dbReference>
<dbReference type="GO" id="GO:0046933">
    <property type="term" value="F:proton-transporting ATP synthase activity, rotational mechanism"/>
    <property type="evidence" value="ECO:0007669"/>
    <property type="project" value="UniProtKB-UniRule"/>
</dbReference>
<dbReference type="CDD" id="cd18113">
    <property type="entry name" value="ATP-synt_F1_alpha_C"/>
    <property type="match status" value="1"/>
</dbReference>
<dbReference type="CDD" id="cd18116">
    <property type="entry name" value="ATP-synt_F1_alpha_N"/>
    <property type="match status" value="1"/>
</dbReference>
<dbReference type="CDD" id="cd01132">
    <property type="entry name" value="F1-ATPase_alpha_CD"/>
    <property type="match status" value="1"/>
</dbReference>
<dbReference type="FunFam" id="1.20.150.20:FF:000001">
    <property type="entry name" value="ATP synthase subunit alpha"/>
    <property type="match status" value="1"/>
</dbReference>
<dbReference type="FunFam" id="2.40.30.20:FF:000001">
    <property type="entry name" value="ATP synthase subunit alpha"/>
    <property type="match status" value="1"/>
</dbReference>
<dbReference type="FunFam" id="3.40.50.300:FF:000002">
    <property type="entry name" value="ATP synthase subunit alpha"/>
    <property type="match status" value="1"/>
</dbReference>
<dbReference type="Gene3D" id="2.40.30.20">
    <property type="match status" value="1"/>
</dbReference>
<dbReference type="Gene3D" id="1.20.150.20">
    <property type="entry name" value="ATP synthase alpha/beta chain, C-terminal domain"/>
    <property type="match status" value="1"/>
</dbReference>
<dbReference type="Gene3D" id="3.40.50.300">
    <property type="entry name" value="P-loop containing nucleotide triphosphate hydrolases"/>
    <property type="match status" value="1"/>
</dbReference>
<dbReference type="HAMAP" id="MF_01346">
    <property type="entry name" value="ATP_synth_alpha_bact"/>
    <property type="match status" value="1"/>
</dbReference>
<dbReference type="InterPro" id="IPR023366">
    <property type="entry name" value="ATP_synth_asu-like_sf"/>
</dbReference>
<dbReference type="InterPro" id="IPR000793">
    <property type="entry name" value="ATP_synth_asu_C"/>
</dbReference>
<dbReference type="InterPro" id="IPR038376">
    <property type="entry name" value="ATP_synth_asu_C_sf"/>
</dbReference>
<dbReference type="InterPro" id="IPR033732">
    <property type="entry name" value="ATP_synth_F1_a_nt-bd_dom"/>
</dbReference>
<dbReference type="InterPro" id="IPR005294">
    <property type="entry name" value="ATP_synth_F1_asu"/>
</dbReference>
<dbReference type="InterPro" id="IPR020003">
    <property type="entry name" value="ATPase_a/bsu_AS"/>
</dbReference>
<dbReference type="InterPro" id="IPR004100">
    <property type="entry name" value="ATPase_F1/V1/A1_a/bsu_N"/>
</dbReference>
<dbReference type="InterPro" id="IPR036121">
    <property type="entry name" value="ATPase_F1/V1/A1_a/bsu_N_sf"/>
</dbReference>
<dbReference type="InterPro" id="IPR000194">
    <property type="entry name" value="ATPase_F1/V1/A1_a/bsu_nucl-bd"/>
</dbReference>
<dbReference type="InterPro" id="IPR027417">
    <property type="entry name" value="P-loop_NTPase"/>
</dbReference>
<dbReference type="NCBIfam" id="TIGR00962">
    <property type="entry name" value="atpA"/>
    <property type="match status" value="1"/>
</dbReference>
<dbReference type="NCBIfam" id="NF009884">
    <property type="entry name" value="PRK13343.1"/>
    <property type="match status" value="1"/>
</dbReference>
<dbReference type="PANTHER" id="PTHR48082">
    <property type="entry name" value="ATP SYNTHASE SUBUNIT ALPHA, MITOCHONDRIAL"/>
    <property type="match status" value="1"/>
</dbReference>
<dbReference type="PANTHER" id="PTHR48082:SF2">
    <property type="entry name" value="ATP SYNTHASE SUBUNIT ALPHA, MITOCHONDRIAL"/>
    <property type="match status" value="1"/>
</dbReference>
<dbReference type="Pfam" id="PF00006">
    <property type="entry name" value="ATP-synt_ab"/>
    <property type="match status" value="1"/>
</dbReference>
<dbReference type="Pfam" id="PF00306">
    <property type="entry name" value="ATP-synt_ab_C"/>
    <property type="match status" value="1"/>
</dbReference>
<dbReference type="Pfam" id="PF02874">
    <property type="entry name" value="ATP-synt_ab_N"/>
    <property type="match status" value="1"/>
</dbReference>
<dbReference type="PIRSF" id="PIRSF039088">
    <property type="entry name" value="F_ATPase_subunit_alpha"/>
    <property type="match status" value="1"/>
</dbReference>
<dbReference type="SUPFAM" id="SSF47917">
    <property type="entry name" value="C-terminal domain of alpha and beta subunits of F1 ATP synthase"/>
    <property type="match status" value="1"/>
</dbReference>
<dbReference type="SUPFAM" id="SSF50615">
    <property type="entry name" value="N-terminal domain of alpha and beta subunits of F1 ATP synthase"/>
    <property type="match status" value="1"/>
</dbReference>
<dbReference type="SUPFAM" id="SSF52540">
    <property type="entry name" value="P-loop containing nucleoside triphosphate hydrolases"/>
    <property type="match status" value="1"/>
</dbReference>
<dbReference type="PROSITE" id="PS00152">
    <property type="entry name" value="ATPASE_ALPHA_BETA"/>
    <property type="match status" value="1"/>
</dbReference>
<sequence>MAIKAEEISALLRSQIENYESEMSVTDVGTVLQIGDGIALIHGLNDCMAGELVEFSNGVLGLAQNLEESNVGVVILGPYTEITEGDEVRRTGRIMEVPVGEELIGRVVNPLGQPIDGQGPINTTKTRPVEQKATGVMARKSVDEPLQTGIKAIDALVPIGRGQRELIIGDRQTGKTTIGIDTILNQKGLDTICIYVAIGQKDSTVRANVEKLRQAGALDYTIVVSASASEPSPLLYIAPYSGVTMGEEFMFNGKHVLIVYDDLTKQAAAYRELSLLLRRPPGREAYPGDVFYLHSRLLERAAKLNDDLGGGSITALPIIETQAGDISAYVPTNVISITDGQIFLQSDLFFSGVRPAINAGQSVSRVGGSAQIKAMKKVAGTLRLDLASYRELESFAQFGSDLDEFTARKLERGKRTVEVLKQDQNKPLPVENQVLIIYALTKGYLDDIPVEDITRFEDELNSWTKSNGSDLLNEIRETGGLPSDDKFEATINEFKKSFSKSE</sequence>
<keyword id="KW-0066">ATP synthesis</keyword>
<keyword id="KW-0067">ATP-binding</keyword>
<keyword id="KW-1003">Cell membrane</keyword>
<keyword id="KW-0139">CF(1)</keyword>
<keyword id="KW-0375">Hydrogen ion transport</keyword>
<keyword id="KW-0406">Ion transport</keyword>
<keyword id="KW-0472">Membrane</keyword>
<keyword id="KW-0547">Nucleotide-binding</keyword>
<keyword id="KW-1278">Translocase</keyword>
<keyword id="KW-0813">Transport</keyword>
<reference key="1">
    <citation type="journal article" date="2005" name="J. Bacteriol.">
        <title>Whole-genome sequencing of Staphylococcus haemolyticus uncovers the extreme plasticity of its genome and the evolution of human-colonizing staphylococcal species.</title>
        <authorList>
            <person name="Takeuchi F."/>
            <person name="Watanabe S."/>
            <person name="Baba T."/>
            <person name="Yuzawa H."/>
            <person name="Ito T."/>
            <person name="Morimoto Y."/>
            <person name="Kuroda M."/>
            <person name="Cui L."/>
            <person name="Takahashi M."/>
            <person name="Ankai A."/>
            <person name="Baba S."/>
            <person name="Fukui S."/>
            <person name="Lee J.C."/>
            <person name="Hiramatsu K."/>
        </authorList>
    </citation>
    <scope>NUCLEOTIDE SEQUENCE [LARGE SCALE GENOMIC DNA]</scope>
    <source>
        <strain>JCSC1435</strain>
    </source>
</reference>